<accession>B2VKT4</accession>
<keyword id="KW-0028">Amino-acid biosynthesis</keyword>
<keyword id="KW-0057">Aromatic amino acid biosynthesis</keyword>
<keyword id="KW-0328">Glycosyltransferase</keyword>
<keyword id="KW-0460">Magnesium</keyword>
<keyword id="KW-0479">Metal-binding</keyword>
<keyword id="KW-1185">Reference proteome</keyword>
<keyword id="KW-0808">Transferase</keyword>
<keyword id="KW-0822">Tryptophan biosynthesis</keyword>
<dbReference type="EC" id="2.4.2.18" evidence="1"/>
<dbReference type="EMBL" id="CU468135">
    <property type="protein sequence ID" value="CAO96648.1"/>
    <property type="molecule type" value="Genomic_DNA"/>
</dbReference>
<dbReference type="SMR" id="B2VKT4"/>
<dbReference type="STRING" id="465817.ETA_16020"/>
<dbReference type="KEGG" id="eta:ETA_16020"/>
<dbReference type="eggNOG" id="COG0547">
    <property type="taxonomic scope" value="Bacteria"/>
</dbReference>
<dbReference type="HOGENOM" id="CLU_034315_2_1_6"/>
<dbReference type="OrthoDB" id="9806430at2"/>
<dbReference type="UniPathway" id="UPA00035">
    <property type="reaction ID" value="UER00041"/>
</dbReference>
<dbReference type="Proteomes" id="UP000001726">
    <property type="component" value="Chromosome"/>
</dbReference>
<dbReference type="GO" id="GO:0005829">
    <property type="term" value="C:cytosol"/>
    <property type="evidence" value="ECO:0007669"/>
    <property type="project" value="TreeGrafter"/>
</dbReference>
<dbReference type="GO" id="GO:0004048">
    <property type="term" value="F:anthranilate phosphoribosyltransferase activity"/>
    <property type="evidence" value="ECO:0007669"/>
    <property type="project" value="UniProtKB-UniRule"/>
</dbReference>
<dbReference type="GO" id="GO:0000287">
    <property type="term" value="F:magnesium ion binding"/>
    <property type="evidence" value="ECO:0007669"/>
    <property type="project" value="UniProtKB-UniRule"/>
</dbReference>
<dbReference type="GO" id="GO:0000162">
    <property type="term" value="P:L-tryptophan biosynthetic process"/>
    <property type="evidence" value="ECO:0007669"/>
    <property type="project" value="UniProtKB-UniRule"/>
</dbReference>
<dbReference type="FunFam" id="1.20.970.10:FF:000003">
    <property type="entry name" value="Anthranilate phosphoribosyltransferase"/>
    <property type="match status" value="1"/>
</dbReference>
<dbReference type="FunFam" id="3.40.1030.10:FF:000002">
    <property type="entry name" value="Anthranilate phosphoribosyltransferase"/>
    <property type="match status" value="1"/>
</dbReference>
<dbReference type="Gene3D" id="3.40.1030.10">
    <property type="entry name" value="Nucleoside phosphorylase/phosphoribosyltransferase catalytic domain"/>
    <property type="match status" value="1"/>
</dbReference>
<dbReference type="Gene3D" id="1.20.970.10">
    <property type="entry name" value="Transferase, Pyrimidine Nucleoside Phosphorylase, Chain C"/>
    <property type="match status" value="1"/>
</dbReference>
<dbReference type="HAMAP" id="MF_00211">
    <property type="entry name" value="TrpD"/>
    <property type="match status" value="1"/>
</dbReference>
<dbReference type="InterPro" id="IPR005940">
    <property type="entry name" value="Anthranilate_Pribosyl_Tfrase"/>
</dbReference>
<dbReference type="InterPro" id="IPR000312">
    <property type="entry name" value="Glycosyl_Trfase_fam3"/>
</dbReference>
<dbReference type="InterPro" id="IPR017459">
    <property type="entry name" value="Glycosyl_Trfase_fam3_N_dom"/>
</dbReference>
<dbReference type="InterPro" id="IPR036320">
    <property type="entry name" value="Glycosyl_Trfase_fam3_N_dom_sf"/>
</dbReference>
<dbReference type="InterPro" id="IPR035902">
    <property type="entry name" value="Nuc_phospho_transferase"/>
</dbReference>
<dbReference type="NCBIfam" id="TIGR01245">
    <property type="entry name" value="trpD"/>
    <property type="match status" value="1"/>
</dbReference>
<dbReference type="PANTHER" id="PTHR43285">
    <property type="entry name" value="ANTHRANILATE PHOSPHORIBOSYLTRANSFERASE"/>
    <property type="match status" value="1"/>
</dbReference>
<dbReference type="PANTHER" id="PTHR43285:SF2">
    <property type="entry name" value="ANTHRANILATE PHOSPHORIBOSYLTRANSFERASE"/>
    <property type="match status" value="1"/>
</dbReference>
<dbReference type="Pfam" id="PF02885">
    <property type="entry name" value="Glycos_trans_3N"/>
    <property type="match status" value="1"/>
</dbReference>
<dbReference type="Pfam" id="PF00591">
    <property type="entry name" value="Glycos_transf_3"/>
    <property type="match status" value="1"/>
</dbReference>
<dbReference type="SUPFAM" id="SSF52418">
    <property type="entry name" value="Nucleoside phosphorylase/phosphoribosyltransferase catalytic domain"/>
    <property type="match status" value="1"/>
</dbReference>
<dbReference type="SUPFAM" id="SSF47648">
    <property type="entry name" value="Nucleoside phosphorylase/phosphoribosyltransferase N-terminal domain"/>
    <property type="match status" value="1"/>
</dbReference>
<feature type="chain" id="PRO_1000099801" description="Anthranilate phosphoribosyltransferase">
    <location>
        <begin position="1"/>
        <end position="332"/>
    </location>
</feature>
<feature type="binding site" evidence="1">
    <location>
        <position position="79"/>
    </location>
    <ligand>
        <name>5-phospho-alpha-D-ribose 1-diphosphate</name>
        <dbReference type="ChEBI" id="CHEBI:58017"/>
    </ligand>
</feature>
<feature type="binding site" evidence="1">
    <location>
        <position position="79"/>
    </location>
    <ligand>
        <name>anthranilate</name>
        <dbReference type="ChEBI" id="CHEBI:16567"/>
        <label>1</label>
    </ligand>
</feature>
<feature type="binding site" evidence="1">
    <location>
        <begin position="82"/>
        <end position="83"/>
    </location>
    <ligand>
        <name>5-phospho-alpha-D-ribose 1-diphosphate</name>
        <dbReference type="ChEBI" id="CHEBI:58017"/>
    </ligand>
</feature>
<feature type="binding site" evidence="1">
    <location>
        <position position="87"/>
    </location>
    <ligand>
        <name>5-phospho-alpha-D-ribose 1-diphosphate</name>
        <dbReference type="ChEBI" id="CHEBI:58017"/>
    </ligand>
</feature>
<feature type="binding site" evidence="1">
    <location>
        <begin position="89"/>
        <end position="92"/>
    </location>
    <ligand>
        <name>5-phospho-alpha-D-ribose 1-diphosphate</name>
        <dbReference type="ChEBI" id="CHEBI:58017"/>
    </ligand>
</feature>
<feature type="binding site" evidence="1">
    <location>
        <position position="91"/>
    </location>
    <ligand>
        <name>Mg(2+)</name>
        <dbReference type="ChEBI" id="CHEBI:18420"/>
        <label>1</label>
    </ligand>
</feature>
<feature type="binding site" evidence="1">
    <location>
        <begin position="107"/>
        <end position="115"/>
    </location>
    <ligand>
        <name>5-phospho-alpha-D-ribose 1-diphosphate</name>
        <dbReference type="ChEBI" id="CHEBI:58017"/>
    </ligand>
</feature>
<feature type="binding site" evidence="1">
    <location>
        <position position="110"/>
    </location>
    <ligand>
        <name>anthranilate</name>
        <dbReference type="ChEBI" id="CHEBI:16567"/>
        <label>1</label>
    </ligand>
</feature>
<feature type="binding site" evidence="1">
    <location>
        <position position="119"/>
    </location>
    <ligand>
        <name>5-phospho-alpha-D-ribose 1-diphosphate</name>
        <dbReference type="ChEBI" id="CHEBI:58017"/>
    </ligand>
</feature>
<feature type="binding site" evidence="1">
    <location>
        <position position="165"/>
    </location>
    <ligand>
        <name>anthranilate</name>
        <dbReference type="ChEBI" id="CHEBI:16567"/>
        <label>2</label>
    </ligand>
</feature>
<feature type="binding site" evidence="1">
    <location>
        <position position="223"/>
    </location>
    <ligand>
        <name>Mg(2+)</name>
        <dbReference type="ChEBI" id="CHEBI:18420"/>
        <label>2</label>
    </ligand>
</feature>
<feature type="binding site" evidence="1">
    <location>
        <position position="224"/>
    </location>
    <ligand>
        <name>Mg(2+)</name>
        <dbReference type="ChEBI" id="CHEBI:18420"/>
        <label>1</label>
    </ligand>
</feature>
<feature type="binding site" evidence="1">
    <location>
        <position position="224"/>
    </location>
    <ligand>
        <name>Mg(2+)</name>
        <dbReference type="ChEBI" id="CHEBI:18420"/>
        <label>2</label>
    </ligand>
</feature>
<protein>
    <recommendedName>
        <fullName evidence="1">Anthranilate phosphoribosyltransferase</fullName>
        <ecNumber evidence="1">2.4.2.18</ecNumber>
    </recommendedName>
</protein>
<comment type="function">
    <text evidence="1">Catalyzes the transfer of the phosphoribosyl group of 5-phosphorylribose-1-pyrophosphate (PRPP) to anthranilate to yield N-(5'-phosphoribosyl)-anthranilate (PRA).</text>
</comment>
<comment type="catalytic activity">
    <reaction evidence="1">
        <text>N-(5-phospho-beta-D-ribosyl)anthranilate + diphosphate = 5-phospho-alpha-D-ribose 1-diphosphate + anthranilate</text>
        <dbReference type="Rhea" id="RHEA:11768"/>
        <dbReference type="ChEBI" id="CHEBI:16567"/>
        <dbReference type="ChEBI" id="CHEBI:18277"/>
        <dbReference type="ChEBI" id="CHEBI:33019"/>
        <dbReference type="ChEBI" id="CHEBI:58017"/>
        <dbReference type="EC" id="2.4.2.18"/>
    </reaction>
</comment>
<comment type="cofactor">
    <cofactor evidence="1">
        <name>Mg(2+)</name>
        <dbReference type="ChEBI" id="CHEBI:18420"/>
    </cofactor>
    <text evidence="1">Binds 2 magnesium ions per monomer.</text>
</comment>
<comment type="pathway">
    <text evidence="1">Amino-acid biosynthesis; L-tryptophan biosynthesis; L-tryptophan from chorismate: step 2/5.</text>
</comment>
<comment type="subunit">
    <text evidence="1">Homodimer.</text>
</comment>
<comment type="similarity">
    <text evidence="1">Belongs to the anthranilate phosphoribosyltransferase family.</text>
</comment>
<name>TRPD_ERWT9</name>
<proteinExistence type="inferred from homology"/>
<gene>
    <name evidence="1" type="primary">trpD</name>
    <name type="ordered locus">ETA_16020</name>
</gene>
<evidence type="ECO:0000255" key="1">
    <source>
        <dbReference type="HAMAP-Rule" id="MF_00211"/>
    </source>
</evidence>
<organism>
    <name type="scientific">Erwinia tasmaniensis (strain DSM 17950 / CFBP 7177 / CIP 109463 / NCPPB 4357 / Et1/99)</name>
    <dbReference type="NCBI Taxonomy" id="465817"/>
    <lineage>
        <taxon>Bacteria</taxon>
        <taxon>Pseudomonadati</taxon>
        <taxon>Pseudomonadota</taxon>
        <taxon>Gammaproteobacteria</taxon>
        <taxon>Enterobacterales</taxon>
        <taxon>Erwiniaceae</taxon>
        <taxon>Erwinia</taxon>
    </lineage>
</organism>
<reference key="1">
    <citation type="journal article" date="2008" name="Environ. Microbiol.">
        <title>The genome of Erwinia tasmaniensis strain Et1/99, a non-pathogenic bacterium in the genus Erwinia.</title>
        <authorList>
            <person name="Kube M."/>
            <person name="Migdoll A.M."/>
            <person name="Mueller I."/>
            <person name="Kuhl H."/>
            <person name="Beck A."/>
            <person name="Reinhardt R."/>
            <person name="Geider K."/>
        </authorList>
    </citation>
    <scope>NUCLEOTIDE SEQUENCE [LARGE SCALE GENOMIC DNA]</scope>
    <source>
        <strain>DSM 17950 / CFBP 7177 / CIP 109463 / NCPPB 4357 / Et1/99</strain>
    </source>
</reference>
<sequence>MNTILEKLYQSEVLTQVESQQLFTAIITGQLAPTQLAAALIAMKVRGETPQEIAGAATALLADAKPFPRPDYPFADIVGTGGDGSNSINISTSSAFVAAACGVKVAKHGNRSVSSQSGSSDLLAAFGISLDLPAEQARQALDELNVCFLFAPQYHSGFRHAMPVRKELKTRTIFNVLGPLINPARPPLAVIGVYSPQLVLPIAETLKMLGYQRAAVVHGGGMDEVALHSATQVAELRDGEITRYQLTPDDFGLSSHPQEALAGGSPEENRDILTRLLQGKGQLAHEEAVAANVALLLKMFGHEDLRDNAQRALATIRSGKAWQHVAALAERG</sequence>